<gene>
    <name evidence="1" type="primary">gatB</name>
    <name type="ordered locus">CJA_2820</name>
</gene>
<accession>B3PC09</accession>
<sequence>MQWETVIGLEVHVQLATKTKIFSGASTAFGAEPNTQACAIDLALPGTLPTPNAEAFRFATMFGLAVNAEIGKRSVFERKNYFYPDLPKGYQTTQLAEPIVGAGYVDLELEGGRTKRVRIHHAHLEEDAGKSLHEDFAGMSGIDLNRAGTPLIEVVTEPDMRSAEEAVAFAKKLHSIVTSLEICDGDMSQGSMRFDVNISVRPKGQEKFGTRTETKNLNSFKFMEEAIALEVERQIDVLEDGGKIIQETRLYNGDTKKARSMRSKEDSNDYRYFPCPDLLPVILDDDYIDAVRQQMPELPDARQARFIGQYALSSYDAGQLSADKLVAAFFEQTAQLSQDAKLSANWVLGELAAHLNKTEQRISNSTVTPELLAGLIARIKDGTLSSKIAKLVFEAICNGEGDADSIIDTRGLKQVSDTGALEKMIDEVIAKNPQQVDNYRNADDSKRPKMLGFFVGQVMKASQGQANPQALNELLLKKLNT</sequence>
<comment type="function">
    <text evidence="1">Allows the formation of correctly charged Asn-tRNA(Asn) or Gln-tRNA(Gln) through the transamidation of misacylated Asp-tRNA(Asn) or Glu-tRNA(Gln) in organisms which lack either or both of asparaginyl-tRNA or glutaminyl-tRNA synthetases. The reaction takes place in the presence of glutamine and ATP through an activated phospho-Asp-tRNA(Asn) or phospho-Glu-tRNA(Gln).</text>
</comment>
<comment type="catalytic activity">
    <reaction evidence="1">
        <text>L-glutamyl-tRNA(Gln) + L-glutamine + ATP + H2O = L-glutaminyl-tRNA(Gln) + L-glutamate + ADP + phosphate + H(+)</text>
        <dbReference type="Rhea" id="RHEA:17521"/>
        <dbReference type="Rhea" id="RHEA-COMP:9681"/>
        <dbReference type="Rhea" id="RHEA-COMP:9684"/>
        <dbReference type="ChEBI" id="CHEBI:15377"/>
        <dbReference type="ChEBI" id="CHEBI:15378"/>
        <dbReference type="ChEBI" id="CHEBI:29985"/>
        <dbReference type="ChEBI" id="CHEBI:30616"/>
        <dbReference type="ChEBI" id="CHEBI:43474"/>
        <dbReference type="ChEBI" id="CHEBI:58359"/>
        <dbReference type="ChEBI" id="CHEBI:78520"/>
        <dbReference type="ChEBI" id="CHEBI:78521"/>
        <dbReference type="ChEBI" id="CHEBI:456216"/>
    </reaction>
</comment>
<comment type="catalytic activity">
    <reaction evidence="1">
        <text>L-aspartyl-tRNA(Asn) + L-glutamine + ATP + H2O = L-asparaginyl-tRNA(Asn) + L-glutamate + ADP + phosphate + 2 H(+)</text>
        <dbReference type="Rhea" id="RHEA:14513"/>
        <dbReference type="Rhea" id="RHEA-COMP:9674"/>
        <dbReference type="Rhea" id="RHEA-COMP:9677"/>
        <dbReference type="ChEBI" id="CHEBI:15377"/>
        <dbReference type="ChEBI" id="CHEBI:15378"/>
        <dbReference type="ChEBI" id="CHEBI:29985"/>
        <dbReference type="ChEBI" id="CHEBI:30616"/>
        <dbReference type="ChEBI" id="CHEBI:43474"/>
        <dbReference type="ChEBI" id="CHEBI:58359"/>
        <dbReference type="ChEBI" id="CHEBI:78515"/>
        <dbReference type="ChEBI" id="CHEBI:78516"/>
        <dbReference type="ChEBI" id="CHEBI:456216"/>
    </reaction>
</comment>
<comment type="subunit">
    <text evidence="1">Heterotrimer of A, B and C subunits.</text>
</comment>
<comment type="similarity">
    <text evidence="1">Belongs to the GatB/GatE family. GatB subfamily.</text>
</comment>
<feature type="chain" id="PRO_1000095195" description="Aspartyl/glutamyl-tRNA(Asn/Gln) amidotransferase subunit B">
    <location>
        <begin position="1"/>
        <end position="481"/>
    </location>
</feature>
<evidence type="ECO:0000255" key="1">
    <source>
        <dbReference type="HAMAP-Rule" id="MF_00121"/>
    </source>
</evidence>
<dbReference type="EC" id="6.3.5.-" evidence="1"/>
<dbReference type="EMBL" id="CP000934">
    <property type="protein sequence ID" value="ACE86255.1"/>
    <property type="molecule type" value="Genomic_DNA"/>
</dbReference>
<dbReference type="RefSeq" id="WP_012488414.1">
    <property type="nucleotide sequence ID" value="NC_010995.1"/>
</dbReference>
<dbReference type="SMR" id="B3PC09"/>
<dbReference type="STRING" id="498211.CJA_2820"/>
<dbReference type="KEGG" id="cja:CJA_2820"/>
<dbReference type="eggNOG" id="COG0064">
    <property type="taxonomic scope" value="Bacteria"/>
</dbReference>
<dbReference type="HOGENOM" id="CLU_019240_0_0_6"/>
<dbReference type="OrthoDB" id="9804078at2"/>
<dbReference type="Proteomes" id="UP000001036">
    <property type="component" value="Chromosome"/>
</dbReference>
<dbReference type="GO" id="GO:0050566">
    <property type="term" value="F:asparaginyl-tRNA synthase (glutamine-hydrolyzing) activity"/>
    <property type="evidence" value="ECO:0007669"/>
    <property type="project" value="RHEA"/>
</dbReference>
<dbReference type="GO" id="GO:0005524">
    <property type="term" value="F:ATP binding"/>
    <property type="evidence" value="ECO:0007669"/>
    <property type="project" value="UniProtKB-KW"/>
</dbReference>
<dbReference type="GO" id="GO:0050567">
    <property type="term" value="F:glutaminyl-tRNA synthase (glutamine-hydrolyzing) activity"/>
    <property type="evidence" value="ECO:0007669"/>
    <property type="project" value="UniProtKB-UniRule"/>
</dbReference>
<dbReference type="GO" id="GO:0070681">
    <property type="term" value="P:glutaminyl-tRNAGln biosynthesis via transamidation"/>
    <property type="evidence" value="ECO:0007669"/>
    <property type="project" value="TreeGrafter"/>
</dbReference>
<dbReference type="GO" id="GO:0006412">
    <property type="term" value="P:translation"/>
    <property type="evidence" value="ECO:0007669"/>
    <property type="project" value="UniProtKB-UniRule"/>
</dbReference>
<dbReference type="FunFam" id="1.10.10.410:FF:000001">
    <property type="entry name" value="Aspartyl/glutamyl-tRNA(Asn/Gln) amidotransferase subunit B"/>
    <property type="match status" value="1"/>
</dbReference>
<dbReference type="FunFam" id="1.10.150.380:FF:000001">
    <property type="entry name" value="Aspartyl/glutamyl-tRNA(Asn/Gln) amidotransferase subunit B"/>
    <property type="match status" value="1"/>
</dbReference>
<dbReference type="Gene3D" id="1.10.10.410">
    <property type="match status" value="1"/>
</dbReference>
<dbReference type="Gene3D" id="1.10.150.380">
    <property type="entry name" value="GatB domain, N-terminal subdomain"/>
    <property type="match status" value="1"/>
</dbReference>
<dbReference type="HAMAP" id="MF_00121">
    <property type="entry name" value="GatB"/>
    <property type="match status" value="1"/>
</dbReference>
<dbReference type="InterPro" id="IPR017959">
    <property type="entry name" value="Asn/Gln-tRNA_amidoTrfase_suB/E"/>
</dbReference>
<dbReference type="InterPro" id="IPR006075">
    <property type="entry name" value="Asn/Gln-tRNA_Trfase_suB/E_cat"/>
</dbReference>
<dbReference type="InterPro" id="IPR018027">
    <property type="entry name" value="Asn/Gln_amidotransferase"/>
</dbReference>
<dbReference type="InterPro" id="IPR003789">
    <property type="entry name" value="Asn/Gln_tRNA_amidoTrase-B-like"/>
</dbReference>
<dbReference type="InterPro" id="IPR004413">
    <property type="entry name" value="GatB"/>
</dbReference>
<dbReference type="InterPro" id="IPR042114">
    <property type="entry name" value="GatB_C_1"/>
</dbReference>
<dbReference type="InterPro" id="IPR023168">
    <property type="entry name" value="GatB_Yqey_C_2"/>
</dbReference>
<dbReference type="InterPro" id="IPR017958">
    <property type="entry name" value="Gln-tRNA_amidoTrfase_suB_CS"/>
</dbReference>
<dbReference type="InterPro" id="IPR014746">
    <property type="entry name" value="Gln_synth/guanido_kin_cat_dom"/>
</dbReference>
<dbReference type="NCBIfam" id="TIGR00133">
    <property type="entry name" value="gatB"/>
    <property type="match status" value="1"/>
</dbReference>
<dbReference type="NCBIfam" id="NF004012">
    <property type="entry name" value="PRK05477.1-2"/>
    <property type="match status" value="1"/>
</dbReference>
<dbReference type="NCBIfam" id="NF004014">
    <property type="entry name" value="PRK05477.1-4"/>
    <property type="match status" value="1"/>
</dbReference>
<dbReference type="NCBIfam" id="NF004015">
    <property type="entry name" value="PRK05477.1-5"/>
    <property type="match status" value="1"/>
</dbReference>
<dbReference type="PANTHER" id="PTHR11659">
    <property type="entry name" value="GLUTAMYL-TRNA GLN AMIDOTRANSFERASE SUBUNIT B MITOCHONDRIAL AND PROKARYOTIC PET112-RELATED"/>
    <property type="match status" value="1"/>
</dbReference>
<dbReference type="PANTHER" id="PTHR11659:SF0">
    <property type="entry name" value="GLUTAMYL-TRNA(GLN) AMIDOTRANSFERASE SUBUNIT B, MITOCHONDRIAL"/>
    <property type="match status" value="1"/>
</dbReference>
<dbReference type="Pfam" id="PF02934">
    <property type="entry name" value="GatB_N"/>
    <property type="match status" value="1"/>
</dbReference>
<dbReference type="Pfam" id="PF02637">
    <property type="entry name" value="GatB_Yqey"/>
    <property type="match status" value="1"/>
</dbReference>
<dbReference type="SMART" id="SM00845">
    <property type="entry name" value="GatB_Yqey"/>
    <property type="match status" value="1"/>
</dbReference>
<dbReference type="SUPFAM" id="SSF89095">
    <property type="entry name" value="GatB/YqeY motif"/>
    <property type="match status" value="1"/>
</dbReference>
<dbReference type="SUPFAM" id="SSF55931">
    <property type="entry name" value="Glutamine synthetase/guanido kinase"/>
    <property type="match status" value="1"/>
</dbReference>
<dbReference type="PROSITE" id="PS01234">
    <property type="entry name" value="GATB"/>
    <property type="match status" value="1"/>
</dbReference>
<protein>
    <recommendedName>
        <fullName evidence="1">Aspartyl/glutamyl-tRNA(Asn/Gln) amidotransferase subunit B</fullName>
        <shortName evidence="1">Asp/Glu-ADT subunit B</shortName>
        <ecNumber evidence="1">6.3.5.-</ecNumber>
    </recommendedName>
</protein>
<proteinExistence type="inferred from homology"/>
<name>GATB_CELJU</name>
<reference key="1">
    <citation type="journal article" date="2008" name="J. Bacteriol.">
        <title>Insights into plant cell wall degradation from the genome sequence of the soil bacterium Cellvibrio japonicus.</title>
        <authorList>
            <person name="DeBoy R.T."/>
            <person name="Mongodin E.F."/>
            <person name="Fouts D.E."/>
            <person name="Tailford L.E."/>
            <person name="Khouri H."/>
            <person name="Emerson J.B."/>
            <person name="Mohamoud Y."/>
            <person name="Watkins K."/>
            <person name="Henrissat B."/>
            <person name="Gilbert H.J."/>
            <person name="Nelson K.E."/>
        </authorList>
    </citation>
    <scope>NUCLEOTIDE SEQUENCE [LARGE SCALE GENOMIC DNA]</scope>
    <source>
        <strain>Ueda107</strain>
    </source>
</reference>
<organism>
    <name type="scientific">Cellvibrio japonicus (strain Ueda107)</name>
    <name type="common">Pseudomonas fluorescens subsp. cellulosa</name>
    <dbReference type="NCBI Taxonomy" id="498211"/>
    <lineage>
        <taxon>Bacteria</taxon>
        <taxon>Pseudomonadati</taxon>
        <taxon>Pseudomonadota</taxon>
        <taxon>Gammaproteobacteria</taxon>
        <taxon>Cellvibrionales</taxon>
        <taxon>Cellvibrionaceae</taxon>
        <taxon>Cellvibrio</taxon>
    </lineage>
</organism>
<keyword id="KW-0067">ATP-binding</keyword>
<keyword id="KW-0436">Ligase</keyword>
<keyword id="KW-0547">Nucleotide-binding</keyword>
<keyword id="KW-0648">Protein biosynthesis</keyword>
<keyword id="KW-1185">Reference proteome</keyword>